<feature type="chain" id="PRO_0000225527" description="DNA-directed RNA polymerase subunit beta'">
    <location>
        <begin position="1"/>
        <end position="1323"/>
    </location>
</feature>
<feature type="binding site" evidence="1">
    <location>
        <position position="60"/>
    </location>
    <ligand>
        <name>Zn(2+)</name>
        <dbReference type="ChEBI" id="CHEBI:29105"/>
        <label>1</label>
    </ligand>
</feature>
<feature type="binding site" evidence="1">
    <location>
        <position position="62"/>
    </location>
    <ligand>
        <name>Zn(2+)</name>
        <dbReference type="ChEBI" id="CHEBI:29105"/>
        <label>1</label>
    </ligand>
</feature>
<feature type="binding site" evidence="1">
    <location>
        <position position="75"/>
    </location>
    <ligand>
        <name>Zn(2+)</name>
        <dbReference type="ChEBI" id="CHEBI:29105"/>
        <label>1</label>
    </ligand>
</feature>
<feature type="binding site" evidence="1">
    <location>
        <position position="78"/>
    </location>
    <ligand>
        <name>Zn(2+)</name>
        <dbReference type="ChEBI" id="CHEBI:29105"/>
        <label>1</label>
    </ligand>
</feature>
<feature type="binding site" evidence="1">
    <location>
        <position position="535"/>
    </location>
    <ligand>
        <name>Mg(2+)</name>
        <dbReference type="ChEBI" id="CHEBI:18420"/>
    </ligand>
</feature>
<feature type="binding site" evidence="1">
    <location>
        <position position="537"/>
    </location>
    <ligand>
        <name>Mg(2+)</name>
        <dbReference type="ChEBI" id="CHEBI:18420"/>
    </ligand>
</feature>
<feature type="binding site" evidence="1">
    <location>
        <position position="539"/>
    </location>
    <ligand>
        <name>Mg(2+)</name>
        <dbReference type="ChEBI" id="CHEBI:18420"/>
    </ligand>
</feature>
<feature type="binding site" evidence="1">
    <location>
        <position position="894"/>
    </location>
    <ligand>
        <name>Zn(2+)</name>
        <dbReference type="ChEBI" id="CHEBI:29105"/>
        <label>2</label>
    </ligand>
</feature>
<feature type="binding site" evidence="1">
    <location>
        <position position="977"/>
    </location>
    <ligand>
        <name>Zn(2+)</name>
        <dbReference type="ChEBI" id="CHEBI:29105"/>
        <label>2</label>
    </ligand>
</feature>
<feature type="binding site" evidence="1">
    <location>
        <position position="984"/>
    </location>
    <ligand>
        <name>Zn(2+)</name>
        <dbReference type="ChEBI" id="CHEBI:29105"/>
        <label>2</label>
    </ligand>
</feature>
<feature type="binding site" evidence="1">
    <location>
        <position position="987"/>
    </location>
    <ligand>
        <name>Zn(2+)</name>
        <dbReference type="ChEBI" id="CHEBI:29105"/>
        <label>2</label>
    </ligand>
</feature>
<keyword id="KW-0240">DNA-directed RNA polymerase</keyword>
<keyword id="KW-0460">Magnesium</keyword>
<keyword id="KW-0479">Metal-binding</keyword>
<keyword id="KW-0548">Nucleotidyltransferase</keyword>
<keyword id="KW-1185">Reference proteome</keyword>
<keyword id="KW-0804">Transcription</keyword>
<keyword id="KW-0808">Transferase</keyword>
<keyword id="KW-0862">Zinc</keyword>
<organism>
    <name type="scientific">Corynebacterium jeikeium (strain K411)</name>
    <dbReference type="NCBI Taxonomy" id="306537"/>
    <lineage>
        <taxon>Bacteria</taxon>
        <taxon>Bacillati</taxon>
        <taxon>Actinomycetota</taxon>
        <taxon>Actinomycetes</taxon>
        <taxon>Mycobacteriales</taxon>
        <taxon>Corynebacteriaceae</taxon>
        <taxon>Corynebacterium</taxon>
    </lineage>
</organism>
<proteinExistence type="inferred from homology"/>
<reference key="1">
    <citation type="journal article" date="2005" name="J. Bacteriol.">
        <title>Complete genome sequence and analysis of the multiresistant nosocomial pathogen Corynebacterium jeikeium K411, a lipid-requiring bacterium of the human skin flora.</title>
        <authorList>
            <person name="Tauch A."/>
            <person name="Kaiser O."/>
            <person name="Hain T."/>
            <person name="Goesmann A."/>
            <person name="Weisshaar B."/>
            <person name="Albersmeier A."/>
            <person name="Bekel T."/>
            <person name="Bischoff N."/>
            <person name="Brune I."/>
            <person name="Chakraborty T."/>
            <person name="Kalinowski J."/>
            <person name="Meyer F."/>
            <person name="Rupp O."/>
            <person name="Schneiker S."/>
            <person name="Viehoever P."/>
            <person name="Puehler A."/>
        </authorList>
    </citation>
    <scope>NUCLEOTIDE SEQUENCE [LARGE SCALE GENOMIC DNA]</scope>
    <source>
        <strain>K411</strain>
    </source>
</reference>
<gene>
    <name evidence="1" type="primary">rpoC</name>
    <name type="ordered locus">jk1845</name>
</gene>
<name>RPOC_CORJK</name>
<accession>Q4JT33</accession>
<sequence>MLDVNFFDELRIGLATADDIRRWSRGEVKKPETINYRTLKPEKDGLFCERIFGPTRDWECGCGKYKRVRYKGIICERCGVEVTKSKVRRERMGHIELAAPVTHIWYFKGVPSRLGYLLDLAPKDLEKIIYFAANIITSVDEEGRHNDQSTLEAEMLLEKKEVEQERDAELADRAKTLEDDLAELEAAGAKNDAKKKVQNAADREMRHIRERAEREIDRLDEIWNTFVKLAPKQMIVDENIYNELVDRYEDYFTGGMGAEAIQTLIRSFDLEAEAESLREVIRDGKGQKKLRALKRLKVVAAFLRSGNDPAGMVLDCIPVIPPELRPMVQLDGGRFATSDLNDLYRRVINRNNRLKRMLDLGAPEIIVNNEKRMLQESVDALFDNGRRGRPVTGPGNRPLKSLSDLLKGKQGRFRQNLLGKRVDYSGRSVIIVGPQLKLHQCGLPKLMALELFKPFVMKRLVEKSYAQNIKSAKRMVERQRPEVWDVLEEAIAEHPVMLNRAPTLHRLGIQAFEPILVEGKAIQLHPLACEAFNADFDGDQMAVHLPLSAEAQAEARILMLASNNILSPASGKPLAMPRLDMVTGLYYLTLLKKPEEFGGQGAYAPATEDGPAQGVYSSLAEAIMAYDRGVLGLQAPIHVRISHLRPTAEIEAELFPDGWQRGQTWLAETTLGRVLFNELLPWNYPYVEGVMAKKPQASVINDLAAKYPMITVAQTVDKLKDAGFYWATRSGVTITMHDVLVLPNKQEVLDNYEAKARVIEKKMARGKINEAERYQSLVDLWKEATDYVGQSVEDLYPDDNPIPMIVKSGAAGNMRQIWTLAGMKGMVTNSRGEYITRPIKTSFREGLSVLEYFNNSHGSRKGLADTALRTADSGYLTRRLVDVAQDVIVREDDCGTKQGAVVPVAVPVLDAEGKPTGNYTAADFVETSVLGRYLASDATASDGTVIVAEGDVVGEGELQALLEAGVEEVKVRSVMTCATNTGVCSTCYGRSMATGKKVEIGEAVGIVAAQSIGEPGTQLTMRTFHLGGVGGDITGGLPRVQELFEARVPKAKSPIASVDGKVRIEDDDNFFTLTIEPDDGSDDVVYEKLSKRQGLATLGTGGVERPIRDGDHVKMGQQLLKGAADPHEVLRVMGRRGVQQHLINEVQKVYRDQGVAIHDKHIEIIVRQMLRRVTVIDSGSTEFLPGSLVDHADAVAASKEAVKTGGRPVEVRAEIMGITKASLATESWLSAASFQETTRVLTDAAINKRSDKLIGLKENVIIGKLIPAGTGISRYRNISVEPTEEARAAAYSLPSSFGDGFYADDTYGEFTGAAVPLDDIDLM</sequence>
<comment type="function">
    <text evidence="1">DNA-dependent RNA polymerase catalyzes the transcription of DNA into RNA using the four ribonucleoside triphosphates as substrates.</text>
</comment>
<comment type="catalytic activity">
    <reaction evidence="1">
        <text>RNA(n) + a ribonucleoside 5'-triphosphate = RNA(n+1) + diphosphate</text>
        <dbReference type="Rhea" id="RHEA:21248"/>
        <dbReference type="Rhea" id="RHEA-COMP:14527"/>
        <dbReference type="Rhea" id="RHEA-COMP:17342"/>
        <dbReference type="ChEBI" id="CHEBI:33019"/>
        <dbReference type="ChEBI" id="CHEBI:61557"/>
        <dbReference type="ChEBI" id="CHEBI:140395"/>
        <dbReference type="EC" id="2.7.7.6"/>
    </reaction>
</comment>
<comment type="cofactor">
    <cofactor evidence="1">
        <name>Mg(2+)</name>
        <dbReference type="ChEBI" id="CHEBI:18420"/>
    </cofactor>
    <text evidence="1">Binds 1 Mg(2+) ion per subunit.</text>
</comment>
<comment type="cofactor">
    <cofactor evidence="1">
        <name>Zn(2+)</name>
        <dbReference type="ChEBI" id="CHEBI:29105"/>
    </cofactor>
    <text evidence="1">Binds 2 Zn(2+) ions per subunit.</text>
</comment>
<comment type="subunit">
    <text evidence="1">The RNAP catalytic core consists of 2 alpha, 1 beta, 1 beta' and 1 omega subunit. When a sigma factor is associated with the core the holoenzyme is formed, which can initiate transcription.</text>
</comment>
<comment type="similarity">
    <text evidence="1">Belongs to the RNA polymerase beta' chain family.</text>
</comment>
<evidence type="ECO:0000255" key="1">
    <source>
        <dbReference type="HAMAP-Rule" id="MF_01322"/>
    </source>
</evidence>
<protein>
    <recommendedName>
        <fullName evidence="1">DNA-directed RNA polymerase subunit beta'</fullName>
        <shortName evidence="1">RNAP subunit beta'</shortName>
        <ecNumber evidence="1">2.7.7.6</ecNumber>
    </recommendedName>
    <alternativeName>
        <fullName evidence="1">RNA polymerase subunit beta'</fullName>
    </alternativeName>
    <alternativeName>
        <fullName evidence="1">Transcriptase subunit beta'</fullName>
    </alternativeName>
</protein>
<dbReference type="EC" id="2.7.7.6" evidence="1"/>
<dbReference type="EMBL" id="CR931997">
    <property type="protein sequence ID" value="CAI38024.1"/>
    <property type="molecule type" value="Genomic_DNA"/>
</dbReference>
<dbReference type="RefSeq" id="WP_011274176.1">
    <property type="nucleotide sequence ID" value="NC_007164.1"/>
</dbReference>
<dbReference type="SMR" id="Q4JT33"/>
<dbReference type="STRING" id="306537.jk1845"/>
<dbReference type="KEGG" id="cjk:jk1845"/>
<dbReference type="PATRIC" id="fig|306537.10.peg.1871"/>
<dbReference type="eggNOG" id="COG0086">
    <property type="taxonomic scope" value="Bacteria"/>
</dbReference>
<dbReference type="HOGENOM" id="CLU_000524_3_1_11"/>
<dbReference type="OrthoDB" id="9815296at2"/>
<dbReference type="Proteomes" id="UP000000545">
    <property type="component" value="Chromosome"/>
</dbReference>
<dbReference type="GO" id="GO:0000428">
    <property type="term" value="C:DNA-directed RNA polymerase complex"/>
    <property type="evidence" value="ECO:0007669"/>
    <property type="project" value="UniProtKB-KW"/>
</dbReference>
<dbReference type="GO" id="GO:0003677">
    <property type="term" value="F:DNA binding"/>
    <property type="evidence" value="ECO:0007669"/>
    <property type="project" value="UniProtKB-UniRule"/>
</dbReference>
<dbReference type="GO" id="GO:0003899">
    <property type="term" value="F:DNA-directed RNA polymerase activity"/>
    <property type="evidence" value="ECO:0007669"/>
    <property type="project" value="UniProtKB-UniRule"/>
</dbReference>
<dbReference type="GO" id="GO:0000287">
    <property type="term" value="F:magnesium ion binding"/>
    <property type="evidence" value="ECO:0007669"/>
    <property type="project" value="UniProtKB-UniRule"/>
</dbReference>
<dbReference type="GO" id="GO:0008270">
    <property type="term" value="F:zinc ion binding"/>
    <property type="evidence" value="ECO:0007669"/>
    <property type="project" value="UniProtKB-UniRule"/>
</dbReference>
<dbReference type="GO" id="GO:0006351">
    <property type="term" value="P:DNA-templated transcription"/>
    <property type="evidence" value="ECO:0007669"/>
    <property type="project" value="UniProtKB-UniRule"/>
</dbReference>
<dbReference type="CDD" id="cd02655">
    <property type="entry name" value="RNAP_beta'_C"/>
    <property type="match status" value="1"/>
</dbReference>
<dbReference type="CDD" id="cd01609">
    <property type="entry name" value="RNAP_beta'_N"/>
    <property type="match status" value="1"/>
</dbReference>
<dbReference type="FunFam" id="1.10.150.390:FF:000002">
    <property type="entry name" value="DNA-directed RNA polymerase subunit beta"/>
    <property type="match status" value="1"/>
</dbReference>
<dbReference type="FunFam" id="1.10.40.90:FF:000001">
    <property type="entry name" value="DNA-directed RNA polymerase subunit beta"/>
    <property type="match status" value="1"/>
</dbReference>
<dbReference type="FunFam" id="4.10.860.120:FF:000001">
    <property type="entry name" value="DNA-directed RNA polymerase subunit beta"/>
    <property type="match status" value="1"/>
</dbReference>
<dbReference type="Gene3D" id="1.10.132.30">
    <property type="match status" value="1"/>
</dbReference>
<dbReference type="Gene3D" id="1.10.150.390">
    <property type="match status" value="1"/>
</dbReference>
<dbReference type="Gene3D" id="1.10.1790.20">
    <property type="match status" value="1"/>
</dbReference>
<dbReference type="Gene3D" id="1.10.40.90">
    <property type="match status" value="1"/>
</dbReference>
<dbReference type="Gene3D" id="2.40.40.20">
    <property type="match status" value="1"/>
</dbReference>
<dbReference type="Gene3D" id="2.40.50.100">
    <property type="match status" value="1"/>
</dbReference>
<dbReference type="Gene3D" id="4.10.860.120">
    <property type="entry name" value="RNA polymerase II, clamp domain"/>
    <property type="match status" value="1"/>
</dbReference>
<dbReference type="Gene3D" id="1.10.274.100">
    <property type="entry name" value="RNA polymerase Rpb1, domain 3"/>
    <property type="match status" value="1"/>
</dbReference>
<dbReference type="HAMAP" id="MF_01322">
    <property type="entry name" value="RNApol_bact_RpoC"/>
    <property type="match status" value="1"/>
</dbReference>
<dbReference type="InterPro" id="IPR045867">
    <property type="entry name" value="DNA-dir_RpoC_beta_prime"/>
</dbReference>
<dbReference type="InterPro" id="IPR012754">
    <property type="entry name" value="DNA-dir_RpoC_beta_prime_bact"/>
</dbReference>
<dbReference type="InterPro" id="IPR000722">
    <property type="entry name" value="RNA_pol_asu"/>
</dbReference>
<dbReference type="InterPro" id="IPR006592">
    <property type="entry name" value="RNA_pol_N"/>
</dbReference>
<dbReference type="InterPro" id="IPR007080">
    <property type="entry name" value="RNA_pol_Rpb1_1"/>
</dbReference>
<dbReference type="InterPro" id="IPR007066">
    <property type="entry name" value="RNA_pol_Rpb1_3"/>
</dbReference>
<dbReference type="InterPro" id="IPR042102">
    <property type="entry name" value="RNA_pol_Rpb1_3_sf"/>
</dbReference>
<dbReference type="InterPro" id="IPR007083">
    <property type="entry name" value="RNA_pol_Rpb1_4"/>
</dbReference>
<dbReference type="InterPro" id="IPR007081">
    <property type="entry name" value="RNA_pol_Rpb1_5"/>
</dbReference>
<dbReference type="InterPro" id="IPR044893">
    <property type="entry name" value="RNA_pol_Rpb1_clamp_domain"/>
</dbReference>
<dbReference type="InterPro" id="IPR038120">
    <property type="entry name" value="Rpb1_funnel_sf"/>
</dbReference>
<dbReference type="NCBIfam" id="NF011498">
    <property type="entry name" value="PRK14906.1"/>
    <property type="match status" value="1"/>
</dbReference>
<dbReference type="NCBIfam" id="TIGR02386">
    <property type="entry name" value="rpoC_TIGR"/>
    <property type="match status" value="1"/>
</dbReference>
<dbReference type="PANTHER" id="PTHR19376">
    <property type="entry name" value="DNA-DIRECTED RNA POLYMERASE"/>
    <property type="match status" value="1"/>
</dbReference>
<dbReference type="PANTHER" id="PTHR19376:SF54">
    <property type="entry name" value="DNA-DIRECTED RNA POLYMERASE SUBUNIT BETA"/>
    <property type="match status" value="1"/>
</dbReference>
<dbReference type="Pfam" id="PF04997">
    <property type="entry name" value="RNA_pol_Rpb1_1"/>
    <property type="match status" value="1"/>
</dbReference>
<dbReference type="Pfam" id="PF00623">
    <property type="entry name" value="RNA_pol_Rpb1_2"/>
    <property type="match status" value="2"/>
</dbReference>
<dbReference type="Pfam" id="PF04983">
    <property type="entry name" value="RNA_pol_Rpb1_3"/>
    <property type="match status" value="1"/>
</dbReference>
<dbReference type="Pfam" id="PF05000">
    <property type="entry name" value="RNA_pol_Rpb1_4"/>
    <property type="match status" value="1"/>
</dbReference>
<dbReference type="Pfam" id="PF04998">
    <property type="entry name" value="RNA_pol_Rpb1_5"/>
    <property type="match status" value="1"/>
</dbReference>
<dbReference type="SMART" id="SM00663">
    <property type="entry name" value="RPOLA_N"/>
    <property type="match status" value="1"/>
</dbReference>
<dbReference type="SUPFAM" id="SSF64484">
    <property type="entry name" value="beta and beta-prime subunits of DNA dependent RNA-polymerase"/>
    <property type="match status" value="1"/>
</dbReference>